<protein>
    <recommendedName>
        <fullName>Guanine nucleotide-binding protein subunit alpha-13</fullName>
        <shortName>G alpha-13</shortName>
        <shortName>G-protein subunit alpha-13</shortName>
    </recommendedName>
</protein>
<keyword id="KW-0002">3D-structure</keyword>
<keyword id="KW-0025">Alternative splicing</keyword>
<keyword id="KW-1003">Cell membrane</keyword>
<keyword id="KW-0963">Cytoplasm</keyword>
<keyword id="KW-0342">GTP-binding</keyword>
<keyword id="KW-0449">Lipoprotein</keyword>
<keyword id="KW-0460">Magnesium</keyword>
<keyword id="KW-0472">Membrane</keyword>
<keyword id="KW-0479">Metal-binding</keyword>
<keyword id="KW-0547">Nucleotide-binding</keyword>
<keyword id="KW-0539">Nucleus</keyword>
<keyword id="KW-0564">Palmitate</keyword>
<keyword id="KW-0597">Phosphoprotein</keyword>
<keyword id="KW-1267">Proteomics identification</keyword>
<keyword id="KW-1185">Reference proteome</keyword>
<keyword id="KW-0807">Transducer</keyword>
<reference key="1">
    <citation type="journal article" date="1995" name="Mol. Cell. Biochem.">
        <title>Expression of GTP-binding protein alpha subunits in human thymocytes.</title>
        <authorList>
            <person name="Kabouridis P.S."/>
            <person name="Waters S.T."/>
            <person name="Escobar S."/>
            <person name="Stanners J."/>
            <person name="Tsoukas C.D."/>
        </authorList>
    </citation>
    <scope>NUCLEOTIDE SEQUENCE [MRNA] (ISOFORM 1)</scope>
    <scope>VARIANT LEU-221</scope>
    <source>
        <tissue>Thymus</tissue>
    </source>
</reference>
<reference key="2">
    <citation type="submission" date="2002-03" db="EMBL/GenBank/DDBJ databases">
        <title>cDNA clones of human proteins involved in signal transduction sequenced by the Guthrie cDNA resource center (www.cdna.org).</title>
        <authorList>
            <person name="Puhl H.L. III"/>
            <person name="Ikeda S.R."/>
            <person name="Aronstam R.S."/>
        </authorList>
    </citation>
    <scope>NUCLEOTIDE SEQUENCE [LARGE SCALE MRNA] (ISOFORM 1)</scope>
    <source>
        <tissue>Brain</tissue>
    </source>
</reference>
<reference key="3">
    <citation type="journal article" date="2004" name="Nat. Genet.">
        <title>Complete sequencing and characterization of 21,243 full-length human cDNAs.</title>
        <authorList>
            <person name="Ota T."/>
            <person name="Suzuki Y."/>
            <person name="Nishikawa T."/>
            <person name="Otsuki T."/>
            <person name="Sugiyama T."/>
            <person name="Irie R."/>
            <person name="Wakamatsu A."/>
            <person name="Hayashi K."/>
            <person name="Sato H."/>
            <person name="Nagai K."/>
            <person name="Kimura K."/>
            <person name="Makita H."/>
            <person name="Sekine M."/>
            <person name="Obayashi M."/>
            <person name="Nishi T."/>
            <person name="Shibahara T."/>
            <person name="Tanaka T."/>
            <person name="Ishii S."/>
            <person name="Yamamoto J."/>
            <person name="Saito K."/>
            <person name="Kawai Y."/>
            <person name="Isono Y."/>
            <person name="Nakamura Y."/>
            <person name="Nagahari K."/>
            <person name="Murakami K."/>
            <person name="Yasuda T."/>
            <person name="Iwayanagi T."/>
            <person name="Wagatsuma M."/>
            <person name="Shiratori A."/>
            <person name="Sudo H."/>
            <person name="Hosoiri T."/>
            <person name="Kaku Y."/>
            <person name="Kodaira H."/>
            <person name="Kondo H."/>
            <person name="Sugawara M."/>
            <person name="Takahashi M."/>
            <person name="Kanda K."/>
            <person name="Yokoi T."/>
            <person name="Furuya T."/>
            <person name="Kikkawa E."/>
            <person name="Omura Y."/>
            <person name="Abe K."/>
            <person name="Kamihara K."/>
            <person name="Katsuta N."/>
            <person name="Sato K."/>
            <person name="Tanikawa M."/>
            <person name="Yamazaki M."/>
            <person name="Ninomiya K."/>
            <person name="Ishibashi T."/>
            <person name="Yamashita H."/>
            <person name="Murakawa K."/>
            <person name="Fujimori K."/>
            <person name="Tanai H."/>
            <person name="Kimata M."/>
            <person name="Watanabe M."/>
            <person name="Hiraoka S."/>
            <person name="Chiba Y."/>
            <person name="Ishida S."/>
            <person name="Ono Y."/>
            <person name="Takiguchi S."/>
            <person name="Watanabe S."/>
            <person name="Yosida M."/>
            <person name="Hotuta T."/>
            <person name="Kusano J."/>
            <person name="Kanehori K."/>
            <person name="Takahashi-Fujii A."/>
            <person name="Hara H."/>
            <person name="Tanase T.-O."/>
            <person name="Nomura Y."/>
            <person name="Togiya S."/>
            <person name="Komai F."/>
            <person name="Hara R."/>
            <person name="Takeuchi K."/>
            <person name="Arita M."/>
            <person name="Imose N."/>
            <person name="Musashino K."/>
            <person name="Yuuki H."/>
            <person name="Oshima A."/>
            <person name="Sasaki N."/>
            <person name="Aotsuka S."/>
            <person name="Yoshikawa Y."/>
            <person name="Matsunawa H."/>
            <person name="Ichihara T."/>
            <person name="Shiohata N."/>
            <person name="Sano S."/>
            <person name="Moriya S."/>
            <person name="Momiyama H."/>
            <person name="Satoh N."/>
            <person name="Takami S."/>
            <person name="Terashima Y."/>
            <person name="Suzuki O."/>
            <person name="Nakagawa S."/>
            <person name="Senoh A."/>
            <person name="Mizoguchi H."/>
            <person name="Goto Y."/>
            <person name="Shimizu F."/>
            <person name="Wakebe H."/>
            <person name="Hishigaki H."/>
            <person name="Watanabe T."/>
            <person name="Sugiyama A."/>
            <person name="Takemoto M."/>
            <person name="Kawakami B."/>
            <person name="Yamazaki M."/>
            <person name="Watanabe K."/>
            <person name="Kumagai A."/>
            <person name="Itakura S."/>
            <person name="Fukuzumi Y."/>
            <person name="Fujimori Y."/>
            <person name="Komiyama M."/>
            <person name="Tashiro H."/>
            <person name="Tanigami A."/>
            <person name="Fujiwara T."/>
            <person name="Ono T."/>
            <person name="Yamada K."/>
            <person name="Fujii Y."/>
            <person name="Ozaki K."/>
            <person name="Hirao M."/>
            <person name="Ohmori Y."/>
            <person name="Kawabata A."/>
            <person name="Hikiji T."/>
            <person name="Kobatake N."/>
            <person name="Inagaki H."/>
            <person name="Ikema Y."/>
            <person name="Okamoto S."/>
            <person name="Okitani R."/>
            <person name="Kawakami T."/>
            <person name="Noguchi S."/>
            <person name="Itoh T."/>
            <person name="Shigeta K."/>
            <person name="Senba T."/>
            <person name="Matsumura K."/>
            <person name="Nakajima Y."/>
            <person name="Mizuno T."/>
            <person name="Morinaga M."/>
            <person name="Sasaki M."/>
            <person name="Togashi T."/>
            <person name="Oyama M."/>
            <person name="Hata H."/>
            <person name="Watanabe M."/>
            <person name="Komatsu T."/>
            <person name="Mizushima-Sugano J."/>
            <person name="Satoh T."/>
            <person name="Shirai Y."/>
            <person name="Takahashi Y."/>
            <person name="Nakagawa K."/>
            <person name="Okumura K."/>
            <person name="Nagase T."/>
            <person name="Nomura N."/>
            <person name="Kikuchi H."/>
            <person name="Masuho Y."/>
            <person name="Yamashita R."/>
            <person name="Nakai K."/>
            <person name="Yada T."/>
            <person name="Nakamura Y."/>
            <person name="Ohara O."/>
            <person name="Isogai T."/>
            <person name="Sugano S."/>
        </authorList>
    </citation>
    <scope>NUCLEOTIDE SEQUENCE [LARGE SCALE MRNA] (ISOFORMS 1 AND 2)</scope>
    <source>
        <tissue>Hippocampus</tissue>
        <tissue>Testis</tissue>
    </source>
</reference>
<reference key="4">
    <citation type="submission" date="2005-07" db="EMBL/GenBank/DDBJ databases">
        <authorList>
            <person name="Mural R.J."/>
            <person name="Istrail S."/>
            <person name="Sutton G.G."/>
            <person name="Florea L."/>
            <person name="Halpern A.L."/>
            <person name="Mobarry C.M."/>
            <person name="Lippert R."/>
            <person name="Walenz B."/>
            <person name="Shatkay H."/>
            <person name="Dew I."/>
            <person name="Miller J.R."/>
            <person name="Flanigan M.J."/>
            <person name="Edwards N.J."/>
            <person name="Bolanos R."/>
            <person name="Fasulo D."/>
            <person name="Halldorsson B.V."/>
            <person name="Hannenhalli S."/>
            <person name="Turner R."/>
            <person name="Yooseph S."/>
            <person name="Lu F."/>
            <person name="Nusskern D.R."/>
            <person name="Shue B.C."/>
            <person name="Zheng X.H."/>
            <person name="Zhong F."/>
            <person name="Delcher A.L."/>
            <person name="Huson D.H."/>
            <person name="Kravitz S.A."/>
            <person name="Mouchard L."/>
            <person name="Reinert K."/>
            <person name="Remington K.A."/>
            <person name="Clark A.G."/>
            <person name="Waterman M.S."/>
            <person name="Eichler E.E."/>
            <person name="Adams M.D."/>
            <person name="Hunkapiller M.W."/>
            <person name="Myers E.W."/>
            <person name="Venter J.C."/>
        </authorList>
    </citation>
    <scope>NUCLEOTIDE SEQUENCE [LARGE SCALE GENOMIC DNA]</scope>
</reference>
<reference key="5">
    <citation type="journal article" date="2004" name="Genome Res.">
        <title>The status, quality, and expansion of the NIH full-length cDNA project: the Mammalian Gene Collection (MGC).</title>
        <authorList>
            <consortium name="The MGC Project Team"/>
        </authorList>
    </citation>
    <scope>NUCLEOTIDE SEQUENCE [LARGE SCALE MRNA] (ISOFORM 1)</scope>
    <source>
        <tissue>Melanoma</tissue>
    </source>
</reference>
<reference key="6">
    <citation type="journal article" date="1999" name="J. Biol. Chem.">
        <title>A novel PDZ domain containing guanine nucleotide exchange factor links heterotrimeric G proteins to Rho.</title>
        <authorList>
            <person name="Fukuhara S."/>
            <person name="Murga C."/>
            <person name="Zohar M."/>
            <person name="Igishi T."/>
            <person name="Gutkind J.S."/>
        </authorList>
    </citation>
    <scope>INTERACTION WITH ARHGEF11</scope>
</reference>
<reference key="7">
    <citation type="journal article" date="2000" name="FEBS Lett.">
        <title>Leukemia-associated Rho guanine nucleotide exchange factor (LARG) links heterotrimeric G proteins of the G(12) family to Rho.</title>
        <authorList>
            <person name="Fukuhara S."/>
            <person name="Chikumi H."/>
            <person name="Gutkind J.S."/>
        </authorList>
    </citation>
    <scope>INTERACTION WITH ARHGEF12</scope>
</reference>
<reference key="8">
    <citation type="journal article" date="2000" name="J. Biol. Chem.">
        <title>Galpha 13 requires palmitoylation for plasma membrane localization, Rho-dependent signaling, and promotion of p115-RhoGEF membrane binding.</title>
        <authorList>
            <person name="Bhattacharyya R."/>
            <person name="Wedegaertner P.B."/>
        </authorList>
    </citation>
    <scope>INTERACTION WITH ARHGEF1</scope>
    <scope>SUBCELLULAR LOCATION</scope>
    <scope>PALMITOYLATION AT CYS-14 AND CYS-18</scope>
    <scope>MUTAGENESIS OF CYS-14 AND CYS-18</scope>
</reference>
<reference key="9">
    <citation type="journal article" date="2002" name="J. Biol. Chem.">
        <title>Galpha12 and Galpha13 negatively regulate the adhesive functions of cadherin.</title>
        <authorList>
            <person name="Meigs T.E."/>
            <person name="Fedor-Chaiken M."/>
            <person name="Kaplan D.D."/>
            <person name="Brackenbury R."/>
            <person name="Casey P.J."/>
        </authorList>
    </citation>
    <scope>FUNCTION</scope>
</reference>
<reference key="10">
    <citation type="journal article" date="2003" name="J. Biol. Chem.">
        <title>PKA-mediated phosphorylation of Galpha 13 switch I region alters the Galpha beta gamma 13-GPCR complex and inhibits Rho activation.</title>
        <authorList>
            <person name="Manganello J.M."/>
            <person name="Huang J.-S."/>
            <person name="Kozasa T."/>
            <person name="Voyno-Yasenetskaya T.A."/>
            <person name="Le Breton G.C."/>
        </authorList>
    </citation>
    <scope>SUBUNIT</scope>
    <scope>PHOSPHORYLATION AT THR-203</scope>
    <scope>MUTAGENESIS OF THR-203</scope>
</reference>
<reference key="11">
    <citation type="journal article" date="2003" name="Proc. Natl. Acad. Sci. U.S.A.">
        <title>Galpha 12 activates Rho GTPase through tyrosine-phosphorylated leukemia-associated RhoGEF.</title>
        <authorList>
            <person name="Suzuki N."/>
            <person name="Nakamura S."/>
            <person name="Mano H."/>
            <person name="Kozasa T."/>
        </authorList>
    </citation>
    <scope>FUNCTION</scope>
</reference>
<reference key="12">
    <citation type="journal article" date="2004" name="J. Biol. Chem.">
        <title>Galpha13 stimulates cell migration through cortactin-interacting protein Hax-1.</title>
        <authorList>
            <person name="Radhika V."/>
            <person name="Onesime D."/>
            <person name="Ha J.H."/>
            <person name="Dhanasekaran N."/>
        </authorList>
    </citation>
    <scope>INTERACTION WITH HAX1</scope>
</reference>
<reference key="13">
    <citation type="journal article" date="2004" name="Proc. Natl. Acad. Sci. U.S.A.">
        <title>A role for Galpha12/Galpha13 in p120ctn regulation.</title>
        <authorList>
            <person name="Krakstad B.F."/>
            <person name="Ardawatia V.V."/>
            <person name="Aragay A.M."/>
        </authorList>
    </citation>
    <scope>FUNCTION</scope>
    <scope>INTERACTION WITH CTNND1</scope>
</reference>
<reference key="14">
    <citation type="journal article" date="2005" name="Biochem. Biophys. Res. Commun.">
        <title>Socius, a novel binding partner of Galpha12/13, promotes the Galpha12-induced RhoA activation.</title>
        <authorList>
            <person name="Tateiwa K."/>
            <person name="Katoh H."/>
            <person name="Negishi M."/>
        </authorList>
    </citation>
    <scope>INTERACTION WITH UBXD5</scope>
</reference>
<reference key="15">
    <citation type="journal article" date="2006" name="J. Biol. Chem.">
        <title>A role for the G12 family of heterotrimeric G proteins in prostate cancer invasion.</title>
        <authorList>
            <person name="Kelly P."/>
            <person name="Stemmle L.N."/>
            <person name="Madden J.F."/>
            <person name="Fields T.A."/>
            <person name="Daaka Y."/>
            <person name="Casey P.J."/>
        </authorList>
    </citation>
    <scope>FUNCTION</scope>
</reference>
<reference key="16">
    <citation type="journal article" date="2006" name="Proc. Natl. Acad. Sci. U.S.A.">
        <title>The G12 family of heterotrimeric G proteins promotes breast cancer invasion and metastasis.</title>
        <authorList>
            <person name="Kelly P."/>
            <person name="Moeller B.J."/>
            <person name="Juneja J."/>
            <person name="Booden M.A."/>
            <person name="Der C.J."/>
            <person name="Daaka Y."/>
            <person name="Dewhirst M.W."/>
            <person name="Fields T.A."/>
            <person name="Casey P.J."/>
        </authorList>
    </citation>
    <scope>FUNCTION</scope>
</reference>
<reference key="17">
    <citation type="journal article" date="2006" name="J. Proteome Res.">
        <title>Proteomic and bioinformatic characterization of the biogenesis and function of melanosomes.</title>
        <authorList>
            <person name="Chi A."/>
            <person name="Valencia J.C."/>
            <person name="Hu Z.-Z."/>
            <person name="Watabe H."/>
            <person name="Yamaguchi H."/>
            <person name="Mangini N.J."/>
            <person name="Huang H."/>
            <person name="Canfield V.A."/>
            <person name="Cheng K.C."/>
            <person name="Yang F."/>
            <person name="Abe R."/>
            <person name="Yamagishi S."/>
            <person name="Shabanowitz J."/>
            <person name="Hearing V.J."/>
            <person name="Wu C."/>
            <person name="Appella E."/>
            <person name="Hunt D.F."/>
        </authorList>
    </citation>
    <scope>SUBCELLULAR LOCATION [LARGE SCALE ANALYSIS]</scope>
    <source>
        <tissue>Melanoma</tissue>
    </source>
</reference>
<reference key="18">
    <citation type="journal article" date="2008" name="Biol. Reprod.">
        <title>RGS22, a novel testis-specific regulator of G-protein signaling involved in human and mouse spermiogenesis along with GNA12/13 subunits.</title>
        <authorList>
            <person name="Hu Y."/>
            <person name="Xing J."/>
            <person name="Chen L."/>
            <person name="Guo X."/>
            <person name="Du Y."/>
            <person name="Zhao C."/>
            <person name="Zhu Y."/>
            <person name="Lin M."/>
            <person name="Zhou Z."/>
            <person name="Sha J."/>
        </authorList>
    </citation>
    <scope>INTERACTION WITH RGS22</scope>
    <scope>SUBCELLULAR LOCATION</scope>
    <scope>TISSUE SPECIFICITY</scope>
    <source>
        <tissue>Testis</tissue>
    </source>
</reference>
<reference key="19">
    <citation type="journal article" date="2011" name="BMC Syst. Biol.">
        <title>Initial characterization of the human central proteome.</title>
        <authorList>
            <person name="Burkard T.R."/>
            <person name="Planyavsky M."/>
            <person name="Kaupe I."/>
            <person name="Breitwieser F.P."/>
            <person name="Buerckstuemmer T."/>
            <person name="Bennett K.L."/>
            <person name="Superti-Furga G."/>
            <person name="Colinge J."/>
        </authorList>
    </citation>
    <scope>IDENTIFICATION BY MASS SPECTROMETRY [LARGE SCALE ANALYSIS]</scope>
</reference>
<reference key="20">
    <citation type="journal article" date="2013" name="Biochim. Biophys. Acta">
        <title>A novel Galphas-binding protein, Gas-2 like 2, facilitates the signaling of the A2A adenosine receptor.</title>
        <authorList>
            <person name="Wu Y.C."/>
            <person name="Lai H.L."/>
            <person name="Chang W.C."/>
            <person name="Lin J.T."/>
            <person name="Liu Y.J."/>
            <person name="Chern Y."/>
        </authorList>
    </citation>
    <scope>INTERACTION WITH GAS2L2</scope>
</reference>
<reference key="21">
    <citation type="journal article" date="2015" name="Proteomics">
        <title>N-terminome analysis of the human mitochondrial proteome.</title>
        <authorList>
            <person name="Vaca Jacome A.S."/>
            <person name="Rabilloud T."/>
            <person name="Schaeffer-Reiss C."/>
            <person name="Rompais M."/>
            <person name="Ayoub D."/>
            <person name="Lane L."/>
            <person name="Bairoch A."/>
            <person name="Van Dorsselaer A."/>
            <person name="Carapito C."/>
        </authorList>
    </citation>
    <scope>IDENTIFICATION BY MASS SPECTROMETRY [LARGE SCALE ANALYSIS]</scope>
</reference>
<reference key="22">
    <citation type="journal article" date="2014" name="Nature">
        <title>Loss of signalling via Galpha13 in germinal centre B-cell-derived lymphoma.</title>
        <authorList>
            <person name="Muppidi J.R."/>
            <person name="Schmitz R."/>
            <person name="Green J.A."/>
            <person name="Xiao W."/>
            <person name="Larsen A.B."/>
            <person name="Braun S.E."/>
            <person name="An J."/>
            <person name="Xu Y."/>
            <person name="Rosenwald A."/>
            <person name="Ott G."/>
            <person name="Gascoyne R.D."/>
            <person name="Rimsza L.M."/>
            <person name="Campo E."/>
            <person name="Jaffe E.S."/>
            <person name="Delabie J."/>
            <person name="Smeland E.B."/>
            <person name="Braziel R.M."/>
            <person name="Tubbs R.R."/>
            <person name="Cook J.R."/>
            <person name="Weisenburger D.D."/>
            <person name="Chan W.C."/>
            <person name="Vaidehi N."/>
            <person name="Staudt L.M."/>
            <person name="Cyster J.G."/>
        </authorList>
    </citation>
    <scope>FUNCTION</scope>
</reference>
<reference key="23">
    <citation type="journal article" date="2016" name="Biochem. Biophys. Res. Commun.">
        <title>Galpha12/13 signaling promotes cervical cancer invasion through the RhoA/ROCK-JNK signaling axis.</title>
        <authorList>
            <person name="Yuan B."/>
            <person name="Cui J."/>
            <person name="Wang W."/>
            <person name="Deng K."/>
        </authorList>
    </citation>
    <scope>FUNCTION</scope>
</reference>
<reference evidence="25" key="24">
    <citation type="journal article" date="2022" name="Cell Discov.">
        <title>Insights into divalent cation regulation and G13-coupling of orphan receptor GPR35.</title>
        <authorList>
            <person name="Duan J."/>
            <person name="Liu Q."/>
            <person name="Yuan Q."/>
            <person name="Ji Y."/>
            <person name="Zhu S."/>
            <person name="Tan Y."/>
            <person name="He X."/>
            <person name="Xu Y."/>
            <person name="Shi J."/>
            <person name="Cheng X."/>
            <person name="Jiang H."/>
            <person name="Eric Xu H."/>
            <person name="Jiang Y."/>
        </authorList>
    </citation>
    <scope>STRUCTURE BY ELECTRON MICROSCOPY (3.20 ANGSTROMS) OF 34-377</scope>
    <scope>INTERACTION WITH GPR35</scope>
</reference>
<reference evidence="23 24" key="25">
    <citation type="journal article" date="2022" name="Nature">
        <title>The tethered peptide activation mechanism of adhesion GPCRs.</title>
        <authorList>
            <person name="Barros-Alvarez X."/>
            <person name="Nwokonko R.M."/>
            <person name="Vizurraga A."/>
            <person name="Matzov D."/>
            <person name="He F."/>
            <person name="Papasergi-Scott M.M."/>
            <person name="Robertson M.J."/>
            <person name="Panova O."/>
            <person name="Yardeni E.H."/>
            <person name="Seven A.B."/>
            <person name="Kwarcinski F.E."/>
            <person name="Su H."/>
            <person name="Peroto M.C."/>
            <person name="Meyerowitz J.G."/>
            <person name="Shalev-Benami M."/>
            <person name="Tall G.G."/>
            <person name="Skiniotis G."/>
        </authorList>
    </citation>
    <scope>STRUCTURE BY ELECTRON MICROSCOPY (2.70 ANGSTROMS) OF 17-377 IN COMPLEX WITH ADGRG1; ADGRL3; GNB1 AND GNG2</scope>
</reference>
<accession>Q14344</accession>
<accession>B2R977</accession>
<accession>B7Z7R0</accession>
<accession>F5H1G8</accession>
<accession>Q8TD70</accession>
<sequence length="377" mass="44050">MADFLPSRSVLSVCFPGCLLTSGEAEQQRKSKEIDKCLSREKTYVKRLVKILLLGAGESGKSTFLKQMRIIHGQDFDQRAREEFRPTIYSNVIKGMRVLVDAREKLHIPWGDNSNQQHGDKMMSFDTRAPMAAQGMVETRVFLQYLPAIRALWADSGIQNAYDRRREFQLGESVKYFLDNLDKLGEPDYIPSQQDILLARRPTKGIHEYDFEIKNVPFKMVDVGGQRSERKRWFECFDSVTSILFLVSSSEFDQVLMEDRLTNRLTESLNIFETIVNNRVFSNVSIILFLNKTDLLEEKVQIVSIKDYFLEFEGDPHCLRDVQKFLVECFRNKRRDQQQKPLYHHFTTAINTENIRLVFRDVKDTILHDNLKQLMLQ</sequence>
<organism>
    <name type="scientific">Homo sapiens</name>
    <name type="common">Human</name>
    <dbReference type="NCBI Taxonomy" id="9606"/>
    <lineage>
        <taxon>Eukaryota</taxon>
        <taxon>Metazoa</taxon>
        <taxon>Chordata</taxon>
        <taxon>Craniata</taxon>
        <taxon>Vertebrata</taxon>
        <taxon>Euteleostomi</taxon>
        <taxon>Mammalia</taxon>
        <taxon>Eutheria</taxon>
        <taxon>Euarchontoglires</taxon>
        <taxon>Primates</taxon>
        <taxon>Haplorrhini</taxon>
        <taxon>Catarrhini</taxon>
        <taxon>Hominidae</taxon>
        <taxon>Homo</taxon>
    </lineage>
</organism>
<evidence type="ECO:0000250" key="1">
    <source>
        <dbReference type="UniProtKB" id="P27601"/>
    </source>
</evidence>
<evidence type="ECO:0000255" key="2">
    <source>
        <dbReference type="PROSITE-ProRule" id="PRU01230"/>
    </source>
</evidence>
<evidence type="ECO:0000269" key="3">
    <source>
    </source>
</evidence>
<evidence type="ECO:0000269" key="4">
    <source>
    </source>
</evidence>
<evidence type="ECO:0000269" key="5">
    <source>
    </source>
</evidence>
<evidence type="ECO:0000269" key="6">
    <source>
    </source>
</evidence>
<evidence type="ECO:0000269" key="7">
    <source>
    </source>
</evidence>
<evidence type="ECO:0000269" key="8">
    <source>
    </source>
</evidence>
<evidence type="ECO:0000269" key="9">
    <source>
    </source>
</evidence>
<evidence type="ECO:0000269" key="10">
    <source>
    </source>
</evidence>
<evidence type="ECO:0000269" key="11">
    <source>
    </source>
</evidence>
<evidence type="ECO:0000269" key="12">
    <source>
    </source>
</evidence>
<evidence type="ECO:0000269" key="13">
    <source>
    </source>
</evidence>
<evidence type="ECO:0000269" key="14">
    <source>
    </source>
</evidence>
<evidence type="ECO:0000269" key="15">
    <source>
    </source>
</evidence>
<evidence type="ECO:0000269" key="16">
    <source>
    </source>
</evidence>
<evidence type="ECO:0000269" key="17">
    <source>
    </source>
</evidence>
<evidence type="ECO:0000269" key="18">
    <source>
    </source>
</evidence>
<evidence type="ECO:0000269" key="19">
    <source>
    </source>
</evidence>
<evidence type="ECO:0000269" key="20">
    <source>
    </source>
</evidence>
<evidence type="ECO:0000303" key="21">
    <source>
    </source>
</evidence>
<evidence type="ECO:0000305" key="22"/>
<evidence type="ECO:0007744" key="23">
    <source>
        <dbReference type="PDB" id="7SF7"/>
    </source>
</evidence>
<evidence type="ECO:0007744" key="24">
    <source>
        <dbReference type="PDB" id="7SF8"/>
    </source>
</evidence>
<evidence type="ECO:0007744" key="25">
    <source>
        <dbReference type="PDB" id="8H8J"/>
    </source>
</evidence>
<evidence type="ECO:0007829" key="26">
    <source>
        <dbReference type="PDB" id="7SF7"/>
    </source>
</evidence>
<evidence type="ECO:0007829" key="27">
    <source>
        <dbReference type="PDB" id="7SF8"/>
    </source>
</evidence>
<evidence type="ECO:0007829" key="28">
    <source>
        <dbReference type="PDB" id="7T6B"/>
    </source>
</evidence>
<evidence type="ECO:0007829" key="29">
    <source>
        <dbReference type="PDB" id="8H8J"/>
    </source>
</evidence>
<evidence type="ECO:0007829" key="30">
    <source>
        <dbReference type="PDB" id="8KGG"/>
    </source>
</evidence>
<name>GNA13_HUMAN</name>
<gene>
    <name type="primary">GNA13</name>
</gene>
<dbReference type="EMBL" id="L22075">
    <property type="protein sequence ID" value="AAA74235.1"/>
    <property type="molecule type" value="mRNA"/>
</dbReference>
<dbReference type="EMBL" id="AF493902">
    <property type="protein sequence ID" value="AAM12616.1"/>
    <property type="molecule type" value="mRNA"/>
</dbReference>
<dbReference type="EMBL" id="AK302400">
    <property type="protein sequence ID" value="BAH13696.1"/>
    <property type="molecule type" value="mRNA"/>
</dbReference>
<dbReference type="EMBL" id="AK313672">
    <property type="protein sequence ID" value="BAG36424.1"/>
    <property type="molecule type" value="mRNA"/>
</dbReference>
<dbReference type="EMBL" id="AC037487">
    <property type="status" value="NOT_ANNOTATED_CDS"/>
    <property type="molecule type" value="Genomic_DNA"/>
</dbReference>
<dbReference type="EMBL" id="CH471099">
    <property type="protein sequence ID" value="EAW88993.1"/>
    <property type="molecule type" value="Genomic_DNA"/>
</dbReference>
<dbReference type="EMBL" id="BC036756">
    <property type="protein sequence ID" value="AAH36756.1"/>
    <property type="molecule type" value="mRNA"/>
</dbReference>
<dbReference type="CCDS" id="CCDS11661.1">
    <molecule id="Q14344-1"/>
</dbReference>
<dbReference type="CCDS" id="CCDS62302.1">
    <molecule id="Q14344-2"/>
</dbReference>
<dbReference type="PIR" id="I57490">
    <property type="entry name" value="I57490"/>
</dbReference>
<dbReference type="RefSeq" id="NP_001269354.1">
    <molecule id="Q14344-2"/>
    <property type="nucleotide sequence ID" value="NM_001282425.2"/>
</dbReference>
<dbReference type="RefSeq" id="NP_006563.2">
    <molecule id="Q14344-1"/>
    <property type="nucleotide sequence ID" value="NM_006572.5"/>
</dbReference>
<dbReference type="PDB" id="7SF7">
    <property type="method" value="EM"/>
    <property type="resolution" value="2.90 A"/>
    <property type="chains" value="B=17-377"/>
</dbReference>
<dbReference type="PDB" id="7SF8">
    <property type="method" value="EM"/>
    <property type="resolution" value="2.70 A"/>
    <property type="chains" value="B=17-377"/>
</dbReference>
<dbReference type="PDB" id="7T6B">
    <property type="method" value="EM"/>
    <property type="resolution" value="3.19 A"/>
    <property type="chains" value="A=17-377"/>
</dbReference>
<dbReference type="PDB" id="7YDH">
    <property type="method" value="EM"/>
    <property type="resolution" value="3.10 A"/>
    <property type="chains" value="A=17-377"/>
</dbReference>
<dbReference type="PDB" id="8H8J">
    <property type="method" value="EM"/>
    <property type="resolution" value="3.20 A"/>
    <property type="chains" value="A=34-377"/>
</dbReference>
<dbReference type="PDB" id="8KGG">
    <property type="method" value="EM"/>
    <property type="resolution" value="3.06 A"/>
    <property type="chains" value="A=204-377"/>
</dbReference>
<dbReference type="PDB" id="8ZX4">
    <property type="method" value="EM"/>
    <property type="resolution" value="2.85 A"/>
    <property type="chains" value="A=17-377"/>
</dbReference>
<dbReference type="PDB" id="8ZX5">
    <property type="method" value="EM"/>
    <property type="resolution" value="3.03 A"/>
    <property type="chains" value="A=17-377"/>
</dbReference>
<dbReference type="PDB" id="9GE2">
    <property type="method" value="EM"/>
    <property type="resolution" value="2.51 A"/>
    <property type="chains" value="A=31-73, A=203-377"/>
</dbReference>
<dbReference type="PDB" id="9GE3">
    <property type="method" value="EM"/>
    <property type="resolution" value="2.87 A"/>
    <property type="chains" value="A=31-73, A=203-377"/>
</dbReference>
<dbReference type="PDB" id="9IY8">
    <property type="method" value="EM"/>
    <property type="resolution" value="3.01 A"/>
    <property type="chains" value="A=17-377"/>
</dbReference>
<dbReference type="PDB" id="9IZH">
    <property type="method" value="EM"/>
    <property type="resolution" value="3.04 A"/>
    <property type="chains" value="A=165-377"/>
</dbReference>
<dbReference type="PDBsum" id="7SF7"/>
<dbReference type="PDBsum" id="7SF8"/>
<dbReference type="PDBsum" id="7T6B"/>
<dbReference type="PDBsum" id="7YDH"/>
<dbReference type="PDBsum" id="8H8J"/>
<dbReference type="PDBsum" id="8KGG"/>
<dbReference type="PDBsum" id="8ZX4"/>
<dbReference type="PDBsum" id="8ZX5"/>
<dbReference type="PDBsum" id="9GE2"/>
<dbReference type="PDBsum" id="9GE3"/>
<dbReference type="PDBsum" id="9IY8"/>
<dbReference type="PDBsum" id="9IZH"/>
<dbReference type="EMDB" id="EMD-25076"/>
<dbReference type="EMDB" id="EMD-25077"/>
<dbReference type="EMDB" id="EMD-25712"/>
<dbReference type="EMDB" id="EMD-32883"/>
<dbReference type="EMDB" id="EMD-33747"/>
<dbReference type="EMDB" id="EMD-34549"/>
<dbReference type="EMDB" id="EMD-37220"/>
<dbReference type="EMDB" id="EMD-51284"/>
<dbReference type="EMDB" id="EMD-51288"/>
<dbReference type="EMDB" id="EMD-60537"/>
<dbReference type="EMDB" id="EMD-60538"/>
<dbReference type="EMDB" id="EMD-60859"/>
<dbReference type="EMDB" id="EMD-60990"/>
<dbReference type="EMDB" id="EMD-61033"/>
<dbReference type="SMR" id="Q14344"/>
<dbReference type="BioGRID" id="115914">
    <property type="interactions" value="176"/>
</dbReference>
<dbReference type="CORUM" id="Q14344"/>
<dbReference type="FunCoup" id="Q14344">
    <property type="interactions" value="2775"/>
</dbReference>
<dbReference type="IntAct" id="Q14344">
    <property type="interactions" value="79"/>
</dbReference>
<dbReference type="MINT" id="Q14344"/>
<dbReference type="STRING" id="9606.ENSP00000400717"/>
<dbReference type="GlyGen" id="Q14344">
    <property type="glycosylation" value="2 sites, 1 N-linked glycan (1 site), 1 O-linked glycan (1 site)"/>
</dbReference>
<dbReference type="iPTMnet" id="Q14344"/>
<dbReference type="MetOSite" id="Q14344"/>
<dbReference type="PhosphoSitePlus" id="Q14344"/>
<dbReference type="SwissPalm" id="Q14344"/>
<dbReference type="BioMuta" id="GNA13"/>
<dbReference type="DMDM" id="38258936"/>
<dbReference type="jPOST" id="Q14344"/>
<dbReference type="MassIVE" id="Q14344"/>
<dbReference type="PaxDb" id="9606-ENSP00000400717"/>
<dbReference type="PeptideAtlas" id="Q14344"/>
<dbReference type="ProteomicsDB" id="25652"/>
<dbReference type="ProteomicsDB" id="59969">
    <molecule id="Q14344-1"/>
</dbReference>
<dbReference type="Pumba" id="Q14344"/>
<dbReference type="Antibodypedia" id="31626">
    <property type="antibodies" value="270 antibodies from 31 providers"/>
</dbReference>
<dbReference type="DNASU" id="10672"/>
<dbReference type="Ensembl" id="ENST00000439174.7">
    <molecule id="Q14344-1"/>
    <property type="protein sequence ID" value="ENSP00000400717.2"/>
    <property type="gene ID" value="ENSG00000120063.10"/>
</dbReference>
<dbReference type="Ensembl" id="ENST00000541118.1">
    <molecule id="Q14344-2"/>
    <property type="protein sequence ID" value="ENSP00000439647.1"/>
    <property type="gene ID" value="ENSG00000120063.10"/>
</dbReference>
<dbReference type="GeneID" id="10672"/>
<dbReference type="KEGG" id="hsa:10672"/>
<dbReference type="MANE-Select" id="ENST00000439174.7">
    <property type="protein sequence ID" value="ENSP00000400717.2"/>
    <property type="RefSeq nucleotide sequence ID" value="NM_006572.6"/>
    <property type="RefSeq protein sequence ID" value="NP_006563.2"/>
</dbReference>
<dbReference type="UCSC" id="uc002jfc.4">
    <molecule id="Q14344-1"/>
    <property type="organism name" value="human"/>
</dbReference>
<dbReference type="AGR" id="HGNC:4381"/>
<dbReference type="CTD" id="10672"/>
<dbReference type="DisGeNET" id="10672"/>
<dbReference type="GeneCards" id="GNA13"/>
<dbReference type="HGNC" id="HGNC:4381">
    <property type="gene designation" value="GNA13"/>
</dbReference>
<dbReference type="HPA" id="ENSG00000120063">
    <property type="expression patterns" value="Tissue enhanced (bone)"/>
</dbReference>
<dbReference type="MalaCards" id="GNA13"/>
<dbReference type="MIM" id="604406">
    <property type="type" value="gene"/>
</dbReference>
<dbReference type="neXtProt" id="NX_Q14344"/>
<dbReference type="OpenTargets" id="ENSG00000120063"/>
<dbReference type="PharmGKB" id="PA28766"/>
<dbReference type="VEuPathDB" id="HostDB:ENSG00000120063"/>
<dbReference type="eggNOG" id="KOG0082">
    <property type="taxonomic scope" value="Eukaryota"/>
</dbReference>
<dbReference type="GeneTree" id="ENSGT00940000157054"/>
<dbReference type="HOGENOM" id="CLU_014184_3_1_1"/>
<dbReference type="InParanoid" id="Q14344"/>
<dbReference type="OMA" id="RFACMRC"/>
<dbReference type="OrthoDB" id="5817230at2759"/>
<dbReference type="PAN-GO" id="Q14344">
    <property type="GO annotations" value="8 GO annotations based on evolutionary models"/>
</dbReference>
<dbReference type="PhylomeDB" id="Q14344"/>
<dbReference type="TreeFam" id="TF300673"/>
<dbReference type="PathwayCommons" id="Q14344"/>
<dbReference type="Reactome" id="R-HSA-193648">
    <property type="pathway name" value="NRAGE signals death through JNK"/>
</dbReference>
<dbReference type="Reactome" id="R-HSA-416482">
    <property type="pathway name" value="G alpha (12/13) signalling events"/>
</dbReference>
<dbReference type="Reactome" id="R-HSA-428930">
    <property type="pathway name" value="Thromboxane signalling through TP receptor"/>
</dbReference>
<dbReference type="Reactome" id="R-HSA-456926">
    <property type="pathway name" value="Thrombin signalling through proteinase activated receptors (PARs)"/>
</dbReference>
<dbReference type="Reactome" id="R-HSA-9013148">
    <property type="pathway name" value="CDC42 GTPase cycle"/>
</dbReference>
<dbReference type="Reactome" id="R-HSA-9013149">
    <property type="pathway name" value="RAC1 GTPase cycle"/>
</dbReference>
<dbReference type="SignaLink" id="Q14344"/>
<dbReference type="SIGNOR" id="Q14344"/>
<dbReference type="BioGRID-ORCS" id="10672">
    <property type="hits" value="46 hits in 1174 CRISPR screens"/>
</dbReference>
<dbReference type="CD-CODE" id="FB4E32DD">
    <property type="entry name" value="Presynaptic clusters and postsynaptic densities"/>
</dbReference>
<dbReference type="ChiTaRS" id="GNA13">
    <property type="organism name" value="human"/>
</dbReference>
<dbReference type="GeneWiki" id="GNA13"/>
<dbReference type="GenomeRNAi" id="10672"/>
<dbReference type="Pharos" id="Q14344">
    <property type="development level" value="Tbio"/>
</dbReference>
<dbReference type="PRO" id="PR:Q14344"/>
<dbReference type="Proteomes" id="UP000005640">
    <property type="component" value="Chromosome 17"/>
</dbReference>
<dbReference type="RNAct" id="Q14344">
    <property type="molecule type" value="protein"/>
</dbReference>
<dbReference type="Bgee" id="ENSG00000120063">
    <property type="expression patterns" value="Expressed in secondary oocyte and 196 other cell types or tissues"/>
</dbReference>
<dbReference type="ExpressionAtlas" id="Q14344">
    <property type="expression patterns" value="baseline and differential"/>
</dbReference>
<dbReference type="GO" id="GO:0031526">
    <property type="term" value="C:brush border membrane"/>
    <property type="evidence" value="ECO:0000318"/>
    <property type="project" value="GO_Central"/>
</dbReference>
<dbReference type="GO" id="GO:0005737">
    <property type="term" value="C:cytoplasm"/>
    <property type="evidence" value="ECO:0000314"/>
    <property type="project" value="UniProtKB"/>
</dbReference>
<dbReference type="GO" id="GO:0005829">
    <property type="term" value="C:cytosol"/>
    <property type="evidence" value="ECO:0000314"/>
    <property type="project" value="HPA"/>
</dbReference>
<dbReference type="GO" id="GO:0070062">
    <property type="term" value="C:extracellular exosome"/>
    <property type="evidence" value="ECO:0007005"/>
    <property type="project" value="UniProtKB"/>
</dbReference>
<dbReference type="GO" id="GO:0005925">
    <property type="term" value="C:focal adhesion"/>
    <property type="evidence" value="ECO:0007005"/>
    <property type="project" value="UniProtKB"/>
</dbReference>
<dbReference type="GO" id="GO:0005834">
    <property type="term" value="C:heterotrimeric G-protein complex"/>
    <property type="evidence" value="ECO:0000318"/>
    <property type="project" value="GO_Central"/>
</dbReference>
<dbReference type="GO" id="GO:0042470">
    <property type="term" value="C:melanosome"/>
    <property type="evidence" value="ECO:0007669"/>
    <property type="project" value="UniProtKB-SubCell"/>
</dbReference>
<dbReference type="GO" id="GO:0016020">
    <property type="term" value="C:membrane"/>
    <property type="evidence" value="ECO:0007005"/>
    <property type="project" value="UniProtKB"/>
</dbReference>
<dbReference type="GO" id="GO:0005634">
    <property type="term" value="C:nucleus"/>
    <property type="evidence" value="ECO:0000314"/>
    <property type="project" value="UniProtKB"/>
</dbReference>
<dbReference type="GO" id="GO:0005886">
    <property type="term" value="C:plasma membrane"/>
    <property type="evidence" value="ECO:0000304"/>
    <property type="project" value="Reactome"/>
</dbReference>
<dbReference type="GO" id="GO:0098794">
    <property type="term" value="C:postsynapse"/>
    <property type="evidence" value="ECO:0007669"/>
    <property type="project" value="Ensembl"/>
</dbReference>
<dbReference type="GO" id="GO:0031752">
    <property type="term" value="F:D5 dopamine receptor binding"/>
    <property type="evidence" value="ECO:0000318"/>
    <property type="project" value="GO_Central"/>
</dbReference>
<dbReference type="GO" id="GO:0003925">
    <property type="term" value="F:G protein activity"/>
    <property type="evidence" value="ECO:0000314"/>
    <property type="project" value="UniProtKB"/>
</dbReference>
<dbReference type="GO" id="GO:0031683">
    <property type="term" value="F:G-protein beta/gamma-subunit complex binding"/>
    <property type="evidence" value="ECO:0000318"/>
    <property type="project" value="GO_Central"/>
</dbReference>
<dbReference type="GO" id="GO:0005525">
    <property type="term" value="F:GTP binding"/>
    <property type="evidence" value="ECO:0007669"/>
    <property type="project" value="UniProtKB-KW"/>
</dbReference>
<dbReference type="GO" id="GO:0003924">
    <property type="term" value="F:GTPase activity"/>
    <property type="evidence" value="ECO:0000318"/>
    <property type="project" value="GO_Central"/>
</dbReference>
<dbReference type="GO" id="GO:0005085">
    <property type="term" value="F:guanyl-nucleotide exchange factor activity"/>
    <property type="evidence" value="ECO:0000304"/>
    <property type="project" value="Reactome"/>
</dbReference>
<dbReference type="GO" id="GO:0046872">
    <property type="term" value="F:metal ion binding"/>
    <property type="evidence" value="ECO:0007669"/>
    <property type="project" value="UniProtKB-KW"/>
</dbReference>
<dbReference type="GO" id="GO:0007189">
    <property type="term" value="P:adenylate cyclase-activating G protein-coupled receptor signaling pathway"/>
    <property type="evidence" value="ECO:0000318"/>
    <property type="project" value="GO_Central"/>
</dbReference>
<dbReference type="GO" id="GO:0007188">
    <property type="term" value="P:adenylate cyclase-modulating G protein-coupled receptor signaling pathway"/>
    <property type="evidence" value="ECO:0000250"/>
    <property type="project" value="UniProtKB"/>
</dbReference>
<dbReference type="GO" id="GO:0001569">
    <property type="term" value="P:branching involved in blood vessel morphogenesis"/>
    <property type="evidence" value="ECO:0007669"/>
    <property type="project" value="Ensembl"/>
</dbReference>
<dbReference type="GO" id="GO:0030154">
    <property type="term" value="P:cell differentiation"/>
    <property type="evidence" value="ECO:0007669"/>
    <property type="project" value="Ensembl"/>
</dbReference>
<dbReference type="GO" id="GO:0001701">
    <property type="term" value="P:in utero embryonic development"/>
    <property type="evidence" value="ECO:0007669"/>
    <property type="project" value="Ensembl"/>
</dbReference>
<dbReference type="GO" id="GO:0030168">
    <property type="term" value="P:platelet activation"/>
    <property type="evidence" value="ECO:0007669"/>
    <property type="project" value="Ensembl"/>
</dbReference>
<dbReference type="GO" id="GO:0008217">
    <property type="term" value="P:regulation of blood pressure"/>
    <property type="evidence" value="ECO:0007669"/>
    <property type="project" value="Ensembl"/>
</dbReference>
<dbReference type="GO" id="GO:0008360">
    <property type="term" value="P:regulation of cell shape"/>
    <property type="evidence" value="ECO:0007669"/>
    <property type="project" value="Ensembl"/>
</dbReference>
<dbReference type="GO" id="GO:0010762">
    <property type="term" value="P:regulation of fibroblast migration"/>
    <property type="evidence" value="ECO:0007669"/>
    <property type="project" value="Ensembl"/>
</dbReference>
<dbReference type="GO" id="GO:0150052">
    <property type="term" value="P:regulation of postsynapse assembly"/>
    <property type="evidence" value="ECO:0007669"/>
    <property type="project" value="Ensembl"/>
</dbReference>
<dbReference type="GO" id="GO:0051056">
    <property type="term" value="P:regulation of small GTPase mediated signal transduction"/>
    <property type="evidence" value="ECO:0000304"/>
    <property type="project" value="Reactome"/>
</dbReference>
<dbReference type="GO" id="GO:0007266">
    <property type="term" value="P:Rho protein signal transduction"/>
    <property type="evidence" value="ECO:0000318"/>
    <property type="project" value="GO_Central"/>
</dbReference>
<dbReference type="GO" id="GO:0160221">
    <property type="term" value="P:Rho-activating G protein-coupled receptor signaling pathway"/>
    <property type="evidence" value="ECO:0000314"/>
    <property type="project" value="UniProtKB"/>
</dbReference>
<dbReference type="GO" id="GO:0007165">
    <property type="term" value="P:signal transduction"/>
    <property type="evidence" value="ECO:0000304"/>
    <property type="project" value="ProtInc"/>
</dbReference>
<dbReference type="CDD" id="cd00066">
    <property type="entry name" value="G-alpha"/>
    <property type="match status" value="1"/>
</dbReference>
<dbReference type="FunFam" id="3.40.50.300:FF:000692">
    <property type="entry name" value="Guanine nucleotide-binding protein subunit alpha"/>
    <property type="match status" value="1"/>
</dbReference>
<dbReference type="FunFam" id="1.10.400.10:FF:000004">
    <property type="entry name" value="Guanine nucleotide-binding protein subunit alpha-12"/>
    <property type="match status" value="1"/>
</dbReference>
<dbReference type="FunFam" id="3.40.50.300:FF:000754">
    <property type="entry name" value="Guanine nucleotide-binding protein subunit alpha-13"/>
    <property type="match status" value="1"/>
</dbReference>
<dbReference type="Gene3D" id="1.10.400.10">
    <property type="entry name" value="GI Alpha 1, domain 2-like"/>
    <property type="match status" value="1"/>
</dbReference>
<dbReference type="Gene3D" id="3.40.50.300">
    <property type="entry name" value="P-loop containing nucleotide triphosphate hydrolases"/>
    <property type="match status" value="1"/>
</dbReference>
<dbReference type="InterPro" id="IPR000469">
    <property type="entry name" value="Gprotein_alpha_12/13"/>
</dbReference>
<dbReference type="InterPro" id="IPR001019">
    <property type="entry name" value="Gprotein_alpha_su"/>
</dbReference>
<dbReference type="InterPro" id="IPR011025">
    <property type="entry name" value="GproteinA_insert"/>
</dbReference>
<dbReference type="InterPro" id="IPR027417">
    <property type="entry name" value="P-loop_NTPase"/>
</dbReference>
<dbReference type="PANTHER" id="PTHR10218">
    <property type="entry name" value="GTP-BINDING PROTEIN ALPHA SUBUNIT"/>
    <property type="match status" value="1"/>
</dbReference>
<dbReference type="PANTHER" id="PTHR10218:SF85">
    <property type="entry name" value="GUANINE NUCLEOTIDE-BINDING PROTEIN SUBUNIT ALPHA-13"/>
    <property type="match status" value="1"/>
</dbReference>
<dbReference type="Pfam" id="PF00503">
    <property type="entry name" value="G-alpha"/>
    <property type="match status" value="1"/>
</dbReference>
<dbReference type="PRINTS" id="PR00318">
    <property type="entry name" value="GPROTEINA"/>
</dbReference>
<dbReference type="PRINTS" id="PR00440">
    <property type="entry name" value="GPROTEINA12"/>
</dbReference>
<dbReference type="SMART" id="SM00275">
    <property type="entry name" value="G_alpha"/>
    <property type="match status" value="1"/>
</dbReference>
<dbReference type="SUPFAM" id="SSF52540">
    <property type="entry name" value="P-loop containing nucleoside triphosphate hydrolases"/>
    <property type="match status" value="1"/>
</dbReference>
<dbReference type="SUPFAM" id="SSF47895">
    <property type="entry name" value="Transducin (alpha subunit), insertion domain"/>
    <property type="match status" value="1"/>
</dbReference>
<dbReference type="PROSITE" id="PS51882">
    <property type="entry name" value="G_ALPHA"/>
    <property type="match status" value="1"/>
</dbReference>
<feature type="chain" id="PRO_0000203773" description="Guanine nucleotide-binding protein subunit alpha-13">
    <location>
        <begin position="1"/>
        <end position="377"/>
    </location>
</feature>
<feature type="domain" description="G-alpha" evidence="2">
    <location>
        <begin position="47"/>
        <end position="377"/>
    </location>
</feature>
<feature type="region of interest" description="G1 motif" evidence="2">
    <location>
        <begin position="50"/>
        <end position="63"/>
    </location>
</feature>
<feature type="region of interest" description="G2 motif" evidence="2">
    <location>
        <begin position="195"/>
        <end position="203"/>
    </location>
</feature>
<feature type="region of interest" description="G3 motif" evidence="2">
    <location>
        <begin position="218"/>
        <end position="227"/>
    </location>
</feature>
<feature type="region of interest" description="G4 motif" evidence="2">
    <location>
        <begin position="287"/>
        <end position="294"/>
    </location>
</feature>
<feature type="region of interest" description="G5 motif" evidence="2">
    <location>
        <begin position="347"/>
        <end position="352"/>
    </location>
</feature>
<feature type="binding site" evidence="1">
    <location>
        <begin position="58"/>
        <end position="63"/>
    </location>
    <ligand>
        <name>GTP</name>
        <dbReference type="ChEBI" id="CHEBI:37565"/>
    </ligand>
</feature>
<feature type="binding site" evidence="1">
    <location>
        <position position="62"/>
    </location>
    <ligand>
        <name>Mg(2+)</name>
        <dbReference type="ChEBI" id="CHEBI:18420"/>
    </ligand>
</feature>
<feature type="binding site" evidence="1">
    <location>
        <position position="173"/>
    </location>
    <ligand>
        <name>GTP</name>
        <dbReference type="ChEBI" id="CHEBI:37565"/>
    </ligand>
</feature>
<feature type="binding site" evidence="1">
    <location>
        <begin position="197"/>
        <end position="200"/>
    </location>
    <ligand>
        <name>GTP</name>
        <dbReference type="ChEBI" id="CHEBI:37565"/>
    </ligand>
</feature>
<feature type="binding site" evidence="1">
    <location>
        <position position="203"/>
    </location>
    <ligand>
        <name>Mg(2+)</name>
        <dbReference type="ChEBI" id="CHEBI:18420"/>
    </ligand>
</feature>
<feature type="binding site" evidence="1">
    <location>
        <begin position="291"/>
        <end position="294"/>
    </location>
    <ligand>
        <name>GTP</name>
        <dbReference type="ChEBI" id="CHEBI:37565"/>
    </ligand>
</feature>
<feature type="binding site" evidence="1">
    <location>
        <position position="349"/>
    </location>
    <ligand>
        <name>GTP</name>
        <dbReference type="ChEBI" id="CHEBI:37565"/>
    </ligand>
</feature>
<feature type="modified residue" description="Phosphothreonine; by PKA" evidence="7">
    <location>
        <position position="203"/>
    </location>
</feature>
<feature type="lipid moiety-binding region" description="S-palmitoyl cysteine" evidence="4">
    <location>
        <position position="14"/>
    </location>
</feature>
<feature type="lipid moiety-binding region" description="S-palmitoyl cysteine" evidence="4">
    <location>
        <position position="18"/>
    </location>
</feature>
<feature type="splice variant" id="VSP_055140" description="In isoform 2." evidence="21">
    <location>
        <begin position="1"/>
        <end position="95"/>
    </location>
</feature>
<feature type="sequence variant" id="VAR_017160" description="In dbSNP:rs1062597." evidence="20">
    <original>V</original>
    <variation>L</variation>
    <location>
        <position position="221"/>
    </location>
</feature>
<feature type="mutagenesis site" description="Fails to localize to plasma membranes and failed to activate Rho-dependent serum response factor-mediated transcription and actin stress fiber formation." evidence="4">
    <original>C</original>
    <variation>S</variation>
    <location>
        <position position="14"/>
    </location>
</feature>
<feature type="mutagenesis site" description="Fails to localize to plasma membranes and failed to activate Rho-dependent serum response factor-mediated transcription and actin stress fiber formation." evidence="4">
    <original>C</original>
    <variation>S</variation>
    <location>
        <position position="18"/>
    </location>
</feature>
<feature type="mutagenesis site" description="Abolishes phosphorylation by PKA; disrupts heterotrimer stability." evidence="7">
    <original>T</original>
    <variation>A</variation>
    <location>
        <position position="203"/>
    </location>
</feature>
<feature type="sequence conflict" description="In Ref. 3; BAH13696." evidence="22" ref="3">
    <original>F</original>
    <variation>L</variation>
    <location>
        <position position="211"/>
    </location>
</feature>
<feature type="helix" evidence="26">
    <location>
        <begin position="24"/>
        <end position="27"/>
    </location>
</feature>
<feature type="helix" evidence="27">
    <location>
        <begin position="28"/>
        <end position="40"/>
    </location>
</feature>
<feature type="helix" evidence="27">
    <location>
        <begin position="42"/>
        <end position="46"/>
    </location>
</feature>
<feature type="strand" evidence="27">
    <location>
        <begin position="49"/>
        <end position="54"/>
    </location>
</feature>
<feature type="turn" evidence="26">
    <location>
        <begin position="57"/>
        <end position="59"/>
    </location>
</feature>
<feature type="helix" evidence="27">
    <location>
        <begin position="61"/>
        <end position="66"/>
    </location>
</feature>
<feature type="turn" evidence="27">
    <location>
        <begin position="67"/>
        <end position="69"/>
    </location>
</feature>
<feature type="strand" evidence="27">
    <location>
        <begin position="206"/>
        <end position="215"/>
    </location>
</feature>
<feature type="strand" evidence="27">
    <location>
        <begin position="217"/>
        <end position="223"/>
    </location>
</feature>
<feature type="helix" evidence="30">
    <location>
        <begin position="226"/>
        <end position="228"/>
    </location>
</feature>
<feature type="turn" evidence="27">
    <location>
        <begin position="232"/>
        <end position="234"/>
    </location>
</feature>
<feature type="helix" evidence="29">
    <location>
        <begin position="235"/>
        <end position="237"/>
    </location>
</feature>
<feature type="strand" evidence="27">
    <location>
        <begin position="241"/>
        <end position="247"/>
    </location>
</feature>
<feature type="strand" evidence="28">
    <location>
        <begin position="260"/>
        <end position="263"/>
    </location>
</feature>
<feature type="helix" evidence="27">
    <location>
        <begin position="265"/>
        <end position="276"/>
    </location>
</feature>
<feature type="turn" evidence="27">
    <location>
        <begin position="280"/>
        <end position="283"/>
    </location>
</feature>
<feature type="strand" evidence="27">
    <location>
        <begin position="285"/>
        <end position="290"/>
    </location>
</feature>
<feature type="helix" evidence="27">
    <location>
        <begin position="296"/>
        <end position="299"/>
    </location>
</feature>
<feature type="turn" evidence="27">
    <location>
        <begin position="300"/>
        <end position="302"/>
    </location>
</feature>
<feature type="helix" evidence="27">
    <location>
        <begin position="305"/>
        <end position="307"/>
    </location>
</feature>
<feature type="helix" evidence="27">
    <location>
        <begin position="319"/>
        <end position="331"/>
    </location>
</feature>
<feature type="helix" evidence="30">
    <location>
        <begin position="337"/>
        <end position="339"/>
    </location>
</feature>
<feature type="strand" evidence="27">
    <location>
        <begin position="342"/>
        <end position="346"/>
    </location>
</feature>
<feature type="strand" evidence="26">
    <location>
        <begin position="351"/>
        <end position="353"/>
    </location>
</feature>
<feature type="helix" evidence="27">
    <location>
        <begin position="354"/>
        <end position="374"/>
    </location>
</feature>
<comment type="function">
    <text evidence="1 6 8 9 12 13 17 18">Guanine nucleotide-binding proteins (G proteins) are involved as modulators or transducers in various transmembrane signaling systems (PubMed:15240885, PubMed:16705036, PubMed:16787920, PubMed:27084452). Activates effector molecule RhoA by binding and activating RhoGEFs (ARHGEF1/p115RhoGEF, ARHGEF11/PDZ-RhoGEF and ARHGEF12/LARG) (PubMed:12515866, PubMed:15240885). GNA13-dependent Rho signaling subsequently regulates transcription factor AP-1 (activating protein-1) (By similarity). Promotes tumor cell invasion and metastasis by activating RhoA/ROCK signaling pathway (PubMed:16705036, PubMed:16787920, PubMed:27084452). Inhibits CDH1-mediated cell adhesion in a process independent from Rho activation (PubMed:11976333). In lymphoid follicles, transmits P2RY8- and S1PR2-dependent signals that lead to inhibition of germinal center (GC) B cell growth and migration outside the GC niche.</text>
</comment>
<comment type="subunit">
    <text evidence="1 3 4 5 7 9 10 11 15 16 19">G proteins are composed of 3 units; alpha, beta and gamma (PubMed:12399457). The alpha chain contains the guanine nucleotide binding site (By similarity). Interacts with UBXD5 (PubMed:16202387). Interacts with HAX1 (PubMed:15339924). Interacts (in GTP-bound form) with PPP5C (via TPR repeats); activates PPP5C phosphatase activity and translocates PPP5C to the cell membrane. Interacts with RGS22 (PubMed:18703424). Interacts (in GTP-bound form) with ARHGEF1 (PubMed:10747909). Interacts (in GTP-bound form) with ARHGEF11 (via RGS domain) (PubMed:10026210). Interacts (in GTP-bound form) with ARHGEF12 (via RGS domain) (PubMed:11094164). Interacts with CTNND1 (PubMed:15240885). Interacts with GASL2L2 (PubMed:23994616). Interacts with GPR35 (PubMed:36543774). Interacts with GPR174 (By similarity).</text>
</comment>
<comment type="interaction">
    <interactant intactId="EBI-465387">
        <id>Q14344</id>
    </interactant>
    <interactant intactId="EBI-465400">
        <id>Q92888</id>
        <label>ARHGEF1</label>
    </interactant>
    <organismsDiffer>false</organismsDiffer>
    <experiments>3</experiments>
</comment>
<comment type="interaction">
    <interactant intactId="EBI-465387">
        <id>Q14344</id>
    </interactant>
    <interactant intactId="EBI-2835269">
        <id>P32302</id>
        <label>CXCR5</label>
    </interactant>
    <organismsDiffer>false</organismsDiffer>
    <experiments>9</experiments>
</comment>
<comment type="subcellular location">
    <subcellularLocation>
        <location evidence="4">Cell membrane</location>
        <topology evidence="4">Lipid-anchor</topology>
    </subcellularLocation>
    <subcellularLocation>
        <location evidence="14">Melanosome</location>
    </subcellularLocation>
    <subcellularLocation>
        <location evidence="4 15">Cytoplasm</location>
    </subcellularLocation>
    <subcellularLocation>
        <location evidence="15">Nucleus</location>
    </subcellularLocation>
    <text evidence="14 15">Identified by mass spectrometry in melanosome fractions from stage I to stage IV (PubMed:17081065). Detected in the cytoplasm of Leydig cells and in the seminiferous epithelium, including differentiating cells from the spermatogonia to mature spermatozoa stages (PubMed:18703424). In round spermatids, also present in the nuclei (PubMed:18703424).</text>
</comment>
<comment type="alternative products">
    <event type="alternative splicing"/>
    <isoform>
        <id>Q14344-1</id>
        <name>1</name>
        <sequence type="displayed"/>
    </isoform>
    <isoform>
        <id>Q14344-2</id>
        <name>2</name>
        <sequence type="described" ref="VSP_055140"/>
    </isoform>
</comment>
<comment type="tissue specificity">
    <text evidence="15">Expressed in testis, including in Leydig cells and in the seminiferous epithelium, in differentiating cells from the spermatogonia to mature spermatozoa stages and round spermatids (at protein level). Expressed in 99.2% of spermatozoa from healthy individuals, but only in 28.6% of macrocephalic spermatozoa from infertile patients (at protein level).</text>
</comment>
<comment type="PTM">
    <text evidence="4">Palmitoylation is critical for proper membrane localization and signaling.</text>
</comment>
<comment type="PTM">
    <text evidence="7">Phosphorylation on Thr-203 by PKA destabilizes the heterotrimer of alpha, beta and gamma, and inhibits Rho activation.</text>
</comment>
<comment type="similarity">
    <text evidence="22">Belongs to the G-alpha family. G(12) subfamily.</text>
</comment>
<proteinExistence type="evidence at protein level"/>